<feature type="chain" id="PRO_0000310919" description="Nucleoprotein">
    <location>
        <begin position="1"/>
        <end position="498"/>
    </location>
</feature>
<feature type="region of interest" description="Disordered" evidence="2">
    <location>
        <begin position="1"/>
        <end position="21"/>
    </location>
</feature>
<feature type="short sequence motif" description="Unconventional nuclear localization signal" evidence="1">
    <location>
        <begin position="1"/>
        <end position="18"/>
    </location>
</feature>
<feature type="short sequence motif" description="Bipartite nuclear localization signal" evidence="1">
    <location>
        <begin position="198"/>
        <end position="216"/>
    </location>
</feature>
<dbReference type="EMBL" id="AY651510">
    <property type="protein sequence ID" value="AAT70641.1"/>
    <property type="molecule type" value="Genomic_RNA"/>
</dbReference>
<dbReference type="SMR" id="Q6DPE9"/>
<dbReference type="GO" id="GO:0019029">
    <property type="term" value="C:helical viral capsid"/>
    <property type="evidence" value="ECO:0007669"/>
    <property type="project" value="UniProtKB-UniRule"/>
</dbReference>
<dbReference type="GO" id="GO:0043657">
    <property type="term" value="C:host cell"/>
    <property type="evidence" value="ECO:0007669"/>
    <property type="project" value="GOC"/>
</dbReference>
<dbReference type="GO" id="GO:0042025">
    <property type="term" value="C:host cell nucleus"/>
    <property type="evidence" value="ECO:0007669"/>
    <property type="project" value="UniProtKB-SubCell"/>
</dbReference>
<dbReference type="GO" id="GO:1990904">
    <property type="term" value="C:ribonucleoprotein complex"/>
    <property type="evidence" value="ECO:0007669"/>
    <property type="project" value="UniProtKB-KW"/>
</dbReference>
<dbReference type="GO" id="GO:0019013">
    <property type="term" value="C:viral nucleocapsid"/>
    <property type="evidence" value="ECO:0007669"/>
    <property type="project" value="UniProtKB-UniRule"/>
</dbReference>
<dbReference type="GO" id="GO:0003723">
    <property type="term" value="F:RNA binding"/>
    <property type="evidence" value="ECO:0007669"/>
    <property type="project" value="UniProtKB-UniRule"/>
</dbReference>
<dbReference type="GO" id="GO:0005198">
    <property type="term" value="F:structural molecule activity"/>
    <property type="evidence" value="ECO:0007669"/>
    <property type="project" value="UniProtKB-UniRule"/>
</dbReference>
<dbReference type="GO" id="GO:0046718">
    <property type="term" value="P:symbiont entry into host cell"/>
    <property type="evidence" value="ECO:0007669"/>
    <property type="project" value="UniProtKB-KW"/>
</dbReference>
<dbReference type="GO" id="GO:0075732">
    <property type="term" value="P:viral penetration into host nucleus"/>
    <property type="evidence" value="ECO:0007669"/>
    <property type="project" value="UniProtKB-UniRule"/>
</dbReference>
<dbReference type="HAMAP" id="MF_04070">
    <property type="entry name" value="INFV_NCAP"/>
    <property type="match status" value="1"/>
</dbReference>
<dbReference type="InterPro" id="IPR002141">
    <property type="entry name" value="Flu_NP"/>
</dbReference>
<dbReference type="Pfam" id="PF00506">
    <property type="entry name" value="Flu_NP"/>
    <property type="match status" value="1"/>
</dbReference>
<dbReference type="SUPFAM" id="SSF161003">
    <property type="entry name" value="flu NP-like"/>
    <property type="match status" value="1"/>
</dbReference>
<organism>
    <name type="scientific">Influenza A virus (strain A/Guinea fowl/Hong Kong/38/2002 H5N1 genotype X0)</name>
    <dbReference type="NCBI Taxonomy" id="284208"/>
    <lineage>
        <taxon>Viruses</taxon>
        <taxon>Riboviria</taxon>
        <taxon>Orthornavirae</taxon>
        <taxon>Negarnaviricota</taxon>
        <taxon>Polyploviricotina</taxon>
        <taxon>Insthoviricetes</taxon>
        <taxon>Articulavirales</taxon>
        <taxon>Orthomyxoviridae</taxon>
        <taxon>Alphainfluenzavirus</taxon>
        <taxon>Alphainfluenzavirus influenzae</taxon>
        <taxon>Influenza A virus</taxon>
    </lineage>
</organism>
<protein>
    <recommendedName>
        <fullName evidence="1">Nucleoprotein</fullName>
    </recommendedName>
    <alternativeName>
        <fullName evidence="1">Nucleocapsid protein</fullName>
        <shortName evidence="1">Protein N</shortName>
    </alternativeName>
</protein>
<proteinExistence type="inferred from homology"/>
<keyword id="KW-0167">Capsid protein</keyword>
<keyword id="KW-1139">Helical capsid protein</keyword>
<keyword id="KW-1048">Host nucleus</keyword>
<keyword id="KW-0945">Host-virus interaction</keyword>
<keyword id="KW-0687">Ribonucleoprotein</keyword>
<keyword id="KW-0694">RNA-binding</keyword>
<keyword id="KW-0543">Viral nucleoprotein</keyword>
<keyword id="KW-1163">Viral penetration into host nucleus</keyword>
<keyword id="KW-0946">Virion</keyword>
<keyword id="KW-1160">Virus entry into host cell</keyword>
<name>NCAP_I02A1</name>
<comment type="function">
    <text evidence="1">Encapsidates the negative strand viral RNA, protecting it from nucleases. The encapsidated genomic RNA is termed the ribonucleoprotein (RNP) and serves as template for transcription and replication. The RNP needs to be localized in the host nucleus to start an infectious cycle, but is too large to diffuse through the nuclear pore complex. NP comprises at least 2 nuclear localization signals that are responsible for the active RNP import into the nucleus through cellular importin alpha/beta pathway. Later in the infection, nclear export of RNPs are mediated through viral proteins NEP interacting with M1 which binds nucleoproteins. It is possible that nucleoprotein binds directly host exportin-1/XPO1 and plays an active role in RNPs nuclear export. M1 interaction with RNP seems to hide nucleoprotein's nuclear localization signals. Soon after a virion infects a new cell, M1 dissociates from the RNP under acidification of the virion driven by M2 protein. Dissociation of M1 from RNP unmasks nucleoprotein's nuclear localization signals, targeting the RNP to the nucleus.</text>
</comment>
<comment type="subunit">
    <text evidence="1">Homomultimerizes to form the nucleocapsid. May bind host exportin-1/XPO1. Binds to viral genomic RNA. Protein-RNA contacts are mediated by a combination of electrostatic interactions between positively charged residues and the phosphate backbone and planar interactions between aromatic side chains and bases.</text>
</comment>
<comment type="subcellular location">
    <subcellularLocation>
        <location evidence="1">Virion</location>
    </subcellularLocation>
    <subcellularLocation>
        <location evidence="1">Host nucleus</location>
    </subcellularLocation>
</comment>
<comment type="PTM">
    <text evidence="1">Late in virus-infected cells, may be cleaved from a 56-kDa protein to a 53-kDa protein by a cellular caspase. This cleavage might be a marker for the onset of apoptosis in infected cells or have a specific function in virus host interaction.</text>
</comment>
<comment type="similarity">
    <text evidence="1">Belongs to the influenza viruses nucleoprotein family.</text>
</comment>
<accession>Q6DPE9</accession>
<evidence type="ECO:0000255" key="1">
    <source>
        <dbReference type="HAMAP-Rule" id="MF_04070"/>
    </source>
</evidence>
<evidence type="ECO:0000256" key="2">
    <source>
        <dbReference type="SAM" id="MobiDB-lite"/>
    </source>
</evidence>
<organismHost>
    <name type="scientific">Aves</name>
    <dbReference type="NCBI Taxonomy" id="8782"/>
</organismHost>
<organismHost>
    <name type="scientific">Felis catus</name>
    <name type="common">Cat</name>
    <name type="synonym">Felis silvestris catus</name>
    <dbReference type="NCBI Taxonomy" id="9685"/>
</organismHost>
<organismHost>
    <name type="scientific">Homo sapiens</name>
    <name type="common">Human</name>
    <dbReference type="NCBI Taxonomy" id="9606"/>
</organismHost>
<organismHost>
    <name type="scientific">Panthera pardus</name>
    <name type="common">Leopard</name>
    <name type="synonym">Felis pardus</name>
    <dbReference type="NCBI Taxonomy" id="9691"/>
</organismHost>
<organismHost>
    <name type="scientific">Panthera tigris</name>
    <name type="common">Tiger</name>
    <dbReference type="NCBI Taxonomy" id="9694"/>
</organismHost>
<organismHost>
    <name type="scientific">Sus scrofa</name>
    <name type="common">Pig</name>
    <dbReference type="NCBI Taxonomy" id="9823"/>
</organismHost>
<gene>
    <name evidence="1" type="primary">NP</name>
</gene>
<reference key="1">
    <citation type="journal article" date="2004" name="Nature">
        <title>Genesis of a highly pathogenic and potentially pandemic H5N1 influenza virus in eastern Asia.</title>
        <authorList>
            <person name="Li K.S."/>
            <person name="Guan Y."/>
            <person name="Wang J."/>
            <person name="Smith G.J.D."/>
            <person name="Xu K.M."/>
            <person name="Duan L."/>
            <person name="Rahardjo A.P."/>
            <person name="Puthavathana P."/>
            <person name="Buranathai C."/>
            <person name="Nguyen T.D."/>
            <person name="Estoepangestie A.T.S."/>
            <person name="Chaisingh A."/>
            <person name="Auewarakul P."/>
            <person name="Long H.T."/>
            <person name="Hanh N.T.H."/>
            <person name="Webby R.J."/>
            <person name="Poon L.L.M."/>
            <person name="Chen H."/>
            <person name="Shortridge K.F."/>
            <person name="Yuen K.Y."/>
            <person name="Webster R.G."/>
            <person name="Peiris J.S.M."/>
        </authorList>
    </citation>
    <scope>NUCLEOTIDE SEQUENCE [GENOMIC RNA]</scope>
</reference>
<sequence>MASQGTKRSYEQMETGGERQNATEIRASVGRMVSGIGRFYIQMCTELKLSDYEGRLIQNSITIERMVLSAFDERRNRYLEEHPSAGKDPKKTGGPIYRRRDGKWVRELILYDKEEIRRIWRQANNGEDATAGLTHLMIWHSNLNDATYQRTRALVRTGMDPRMCSLMQGSTLPRRSGAAGAAIKGVGTMVMELIRMIKRGINDRNFWRGENGRRTRIAYERMCNILKGKFQTAAQRAMMDQVRESRNPGNAEIEDLIFLARSALILRGSVAHKSCLPACVYGLAVASGYDFEREGYSLVGIDPFRLLQNSQVFSLIRPNENPAHKSQLVWMACHSAAFEDLRVSSFIRGTRVVPRGQLSTRGVQIASNENMEAMDSNTLELRSRYWAIRTRSGGNTNQQRASAGQISVQPTFSVQRNLPFERATIMAAFTGNTEGRTSDMRTEIIRMMESARPEDVSFQGRGVFELSDEKATNPIVPSFDMNNEGSYFFGDNAEEYDN</sequence>